<proteinExistence type="evidence at protein level"/>
<organism>
    <name type="scientific">Homo sapiens</name>
    <name type="common">Human</name>
    <dbReference type="NCBI Taxonomy" id="9606"/>
    <lineage>
        <taxon>Eukaryota</taxon>
        <taxon>Metazoa</taxon>
        <taxon>Chordata</taxon>
        <taxon>Craniata</taxon>
        <taxon>Vertebrata</taxon>
        <taxon>Euteleostomi</taxon>
        <taxon>Mammalia</taxon>
        <taxon>Eutheria</taxon>
        <taxon>Euarchontoglires</taxon>
        <taxon>Primates</taxon>
        <taxon>Haplorrhini</taxon>
        <taxon>Catarrhini</taxon>
        <taxon>Hominidae</taxon>
        <taxon>Homo</taxon>
    </lineage>
</organism>
<protein>
    <recommendedName>
        <fullName>Heterogeneous nuclear ribonucleoprotein H2</fullName>
        <shortName>hnRNP H2</shortName>
    </recommendedName>
    <alternativeName>
        <fullName>FTP-3</fullName>
    </alternativeName>
    <alternativeName>
        <fullName>Heterogeneous nuclear ribonucleoprotein H'</fullName>
        <shortName>hnRNP H'</shortName>
    </alternativeName>
    <component>
        <recommendedName>
            <fullName>Heterogeneous nuclear ribonucleoprotein H2, N-terminally processed</fullName>
        </recommendedName>
    </component>
</protein>
<name>HNRH2_HUMAN</name>
<comment type="function">
    <text>This protein is a component of the heterogeneous nuclear ribonucleoprotein (hnRNP) complexes which provide the substrate for the processing events that pre-mRNAs undergo before becoming functional, translatable mRNAs in the cytoplasm. Binds poly(RG).</text>
</comment>
<comment type="subunit">
    <text evidence="4 5">Component of a ribonucleoprotein complex containing mRNAs and RNA-binding proteins including DDX5, HNRNPH2 and SRSF1 as well as splicing regulator ARVCF (PubMed:24644279). Interacts with TXNL4/DIM1 (PubMed:11054566).</text>
</comment>
<comment type="interaction">
    <interactant intactId="EBI-352823">
        <id>P55795</id>
    </interactant>
    <interactant intactId="EBI-12010594">
        <id>O75909-2</id>
        <label>CCNK</label>
    </interactant>
    <organismsDiffer>false</organismsDiffer>
    <experiments>3</experiments>
</comment>
<comment type="interaction">
    <interactant intactId="EBI-352823">
        <id>P55795</id>
    </interactant>
    <interactant intactId="EBI-7116203">
        <id>O75031</id>
        <label>HSF2BP</label>
    </interactant>
    <organismsDiffer>false</organismsDiffer>
    <experiments>3</experiments>
</comment>
<comment type="interaction">
    <interactant intactId="EBI-352823">
        <id>P55795</id>
    </interactant>
    <interactant intactId="EBI-726515">
        <id>O43347</id>
        <label>MSI1</label>
    </interactant>
    <organismsDiffer>false</organismsDiffer>
    <experiments>5</experiments>
</comment>
<comment type="interaction">
    <interactant intactId="EBI-352823">
        <id>P55795</id>
    </interactant>
    <interactant intactId="EBI-2462339">
        <id>Q96DH6</id>
        <label>MSI2</label>
    </interactant>
    <organismsDiffer>false</organismsDiffer>
    <experiments>6</experiments>
</comment>
<comment type="interaction">
    <interactant intactId="EBI-352823">
        <id>P55795</id>
    </interactant>
    <interactant intactId="EBI-357174">
        <id>Q02809</id>
        <label>PLOD1</label>
    </interactant>
    <organismsDiffer>false</organismsDiffer>
    <experiments>5</experiments>
</comment>
<comment type="interaction">
    <interactant intactId="EBI-352823">
        <id>P55795</id>
    </interactant>
    <interactant intactId="EBI-10180409">
        <id>Q969V4</id>
        <label>TEKT1</label>
    </interactant>
    <organismsDiffer>false</organismsDiffer>
    <experiments>8</experiments>
</comment>
<comment type="subcellular location">
    <subcellularLocation>
        <location evidence="5">Nucleus</location>
        <location evidence="5">Nucleoplasm</location>
    </subcellularLocation>
</comment>
<comment type="tissue specificity">
    <text>Expressed ubiquitously.</text>
</comment>
<comment type="disease" evidence="6">
    <disease id="DI-04850">
        <name>Intellectual developmental disorder, X-linked, syndromic, Bain type</name>
        <acronym>MRXSB</acronym>
        <description>A form of intellectual disability, a disorder characterized by significantly below average general intellectual functioning associated with impairments in adaptive behavior and manifested during the developmental period. MRXSB patients manifest developmental delay, intellectual disability, autism, hypotonia, seizures, and dysmorphic facial features. Only females are affected.</description>
        <dbReference type="MIM" id="300986"/>
    </disease>
    <text>The disease is caused by variants affecting the gene represented in this entry.</text>
</comment>
<evidence type="ECO:0000250" key="1">
    <source>
        <dbReference type="UniProtKB" id="P31943"/>
    </source>
</evidence>
<evidence type="ECO:0000250" key="2">
    <source>
        <dbReference type="UniProtKB" id="P70333"/>
    </source>
</evidence>
<evidence type="ECO:0000255" key="3">
    <source>
        <dbReference type="PROSITE-ProRule" id="PRU00176"/>
    </source>
</evidence>
<evidence type="ECO:0000269" key="4">
    <source>
    </source>
</evidence>
<evidence type="ECO:0000269" key="5">
    <source>
    </source>
</evidence>
<evidence type="ECO:0000269" key="6">
    <source>
    </source>
</evidence>
<evidence type="ECO:0000269" key="7">
    <source ref="7"/>
</evidence>
<evidence type="ECO:0007744" key="8">
    <source>
    </source>
</evidence>
<evidence type="ECO:0007744" key="9">
    <source>
    </source>
</evidence>
<evidence type="ECO:0007744" key="10">
    <source>
    </source>
</evidence>
<evidence type="ECO:0007744" key="11">
    <source>
    </source>
</evidence>
<evidence type="ECO:0007744" key="12">
    <source>
    </source>
</evidence>
<evidence type="ECO:0007744" key="13">
    <source>
    </source>
</evidence>
<evidence type="ECO:0007744" key="14">
    <source>
    </source>
</evidence>
<evidence type="ECO:0007744" key="15">
    <source>
    </source>
</evidence>
<evidence type="ECO:0007744" key="16">
    <source>
    </source>
</evidence>
<evidence type="ECO:0007744" key="17">
    <source>
    </source>
</evidence>
<evidence type="ECO:0007829" key="18">
    <source>
        <dbReference type="PDB" id="1WEZ"/>
    </source>
</evidence>
<evidence type="ECO:0007829" key="19">
    <source>
        <dbReference type="PDB" id="1WG5"/>
    </source>
</evidence>
<evidence type="ECO:0007829" key="20">
    <source>
        <dbReference type="PDB" id="6DG1"/>
    </source>
</evidence>
<feature type="chain" id="PRO_0000081859" description="Heterogeneous nuclear ribonucleoprotein H2">
    <location>
        <begin position="1"/>
        <end position="449"/>
    </location>
</feature>
<feature type="initiator methionine" description="Removed; alternate" evidence="1">
    <location>
        <position position="1"/>
    </location>
</feature>
<feature type="chain" id="PRO_0000434385" description="Heterogeneous nuclear ribonucleoprotein H2, N-terminally processed">
    <location>
        <begin position="2"/>
        <end position="449"/>
    </location>
</feature>
<feature type="domain" description="RRM 1" evidence="3">
    <location>
        <begin position="11"/>
        <end position="90"/>
    </location>
</feature>
<feature type="domain" description="RRM 2" evidence="3">
    <location>
        <begin position="111"/>
        <end position="188"/>
    </location>
</feature>
<feature type="repeat" description="1-1">
    <location>
        <begin position="234"/>
        <end position="249"/>
    </location>
</feature>
<feature type="domain" description="RRM 3" evidence="3">
    <location>
        <begin position="289"/>
        <end position="364"/>
    </location>
</feature>
<feature type="repeat" description="2-1">
    <location>
        <begin position="354"/>
        <end position="372"/>
    </location>
</feature>
<feature type="repeat" description="2-2">
    <location>
        <begin position="374"/>
        <end position="392"/>
    </location>
</feature>
<feature type="repeat" description="1-2">
    <location>
        <begin position="418"/>
        <end position="433"/>
    </location>
</feature>
<feature type="region of interest" description="2 X 16 AA Gly-rich approximate repeats">
    <location>
        <begin position="234"/>
        <end position="433"/>
    </location>
</feature>
<feature type="region of interest" description="2 X 19 AA perfect repeats">
    <location>
        <begin position="354"/>
        <end position="392"/>
    </location>
</feature>
<feature type="modified residue" description="N-acetylmethionine" evidence="7 10 13 14">
    <location>
        <position position="1"/>
    </location>
</feature>
<feature type="modified residue" description="N-acetylmethionine; in Heterogeneous nuclear ribonucleoprotein H2, N-terminally processed" evidence="1">
    <location>
        <position position="2"/>
    </location>
</feature>
<feature type="modified residue" description="Phosphoserine" evidence="1">
    <location>
        <position position="23"/>
    </location>
</feature>
<feature type="modified residue" description="Phosphoserine" evidence="1">
    <location>
        <position position="54"/>
    </location>
</feature>
<feature type="modified residue" description="Phosphoserine" evidence="1">
    <location>
        <position position="63"/>
    </location>
</feature>
<feature type="modified residue" description="Phosphoserine" evidence="2">
    <location>
        <position position="90"/>
    </location>
</feature>
<feature type="modified residue" description="Dimethylated arginine; alternate" evidence="1">
    <location>
        <position position="233"/>
    </location>
</feature>
<feature type="modified residue" description="Omega-N-methylarginine; alternate" evidence="16">
    <location>
        <position position="233"/>
    </location>
</feature>
<feature type="modified residue" description="Phosphotyrosine" evidence="1">
    <location>
        <position position="246"/>
    </location>
</feature>
<feature type="modified residue" description="Phosphoserine" evidence="8 9 11 12 15">
    <location>
        <position position="310"/>
    </location>
</feature>
<feature type="cross-link" description="Glycyl lysine isopeptide (Lys-Gly) (interchain with G-Cter in SUMO2)" evidence="17">
    <location>
        <position position="35"/>
    </location>
</feature>
<feature type="cross-link" description="Glycyl lysine isopeptide (Lys-Gly) (interchain with G-Cter in SUMO2)" evidence="1">
    <location>
        <position position="87"/>
    </location>
</feature>
<feature type="cross-link" description="Glycyl lysine isopeptide (Lys-Gly) (interchain with G-Cter in SUMO2)" evidence="1">
    <location>
        <position position="98"/>
    </location>
</feature>
<feature type="sequence variant" id="VAR_077233" description="In MRXSB; dbSNP:rs886039764." evidence="6">
    <original>R</original>
    <variation>Q</variation>
    <location>
        <position position="206"/>
    </location>
</feature>
<feature type="sequence variant" id="VAR_077234" description="In MRXSB; dbSNP:rs886039763." evidence="6">
    <original>R</original>
    <variation>W</variation>
    <location>
        <position position="206"/>
    </location>
</feature>
<feature type="sequence variant" id="VAR_077235" description="In MRXSB; dbSNP:rs1555988417." evidence="6">
    <original>P</original>
    <variation>L</variation>
    <location>
        <position position="209"/>
    </location>
</feature>
<feature type="strand" evidence="20">
    <location>
        <begin position="101"/>
        <end position="110"/>
    </location>
</feature>
<feature type="strand" evidence="19">
    <location>
        <begin position="112"/>
        <end position="117"/>
    </location>
</feature>
<feature type="helix" evidence="19">
    <location>
        <begin position="124"/>
        <end position="130"/>
    </location>
</feature>
<feature type="turn" evidence="19">
    <location>
        <begin position="131"/>
        <end position="133"/>
    </location>
</feature>
<feature type="strand" evidence="19">
    <location>
        <begin position="136"/>
        <end position="142"/>
    </location>
</feature>
<feature type="strand" evidence="19">
    <location>
        <begin position="147"/>
        <end position="149"/>
    </location>
</feature>
<feature type="strand" evidence="19">
    <location>
        <begin position="153"/>
        <end position="161"/>
    </location>
</feature>
<feature type="helix" evidence="19">
    <location>
        <begin position="162"/>
        <end position="169"/>
    </location>
</feature>
<feature type="turn" evidence="19">
    <location>
        <begin position="170"/>
        <end position="173"/>
    </location>
</feature>
<feature type="strand" evidence="19">
    <location>
        <begin position="176"/>
        <end position="179"/>
    </location>
</feature>
<feature type="strand" evidence="19">
    <location>
        <begin position="182"/>
        <end position="186"/>
    </location>
</feature>
<feature type="turn" evidence="19">
    <location>
        <begin position="188"/>
        <end position="190"/>
    </location>
</feature>
<feature type="strand" evidence="18">
    <location>
        <begin position="286"/>
        <end position="288"/>
    </location>
</feature>
<feature type="strand" evidence="18">
    <location>
        <begin position="290"/>
        <end position="295"/>
    </location>
</feature>
<feature type="helix" evidence="18">
    <location>
        <begin position="302"/>
        <end position="307"/>
    </location>
</feature>
<feature type="strand" evidence="18">
    <location>
        <begin position="315"/>
        <end position="325"/>
    </location>
</feature>
<feature type="strand" evidence="18">
    <location>
        <begin position="327"/>
        <end position="334"/>
    </location>
</feature>
<feature type="strand" evidence="18">
    <location>
        <begin position="336"/>
        <end position="338"/>
    </location>
</feature>
<feature type="helix" evidence="18">
    <location>
        <begin position="339"/>
        <end position="345"/>
    </location>
</feature>
<feature type="strand" evidence="18">
    <location>
        <begin position="352"/>
        <end position="355"/>
    </location>
</feature>
<feature type="strand" evidence="18">
    <location>
        <begin position="358"/>
        <end position="362"/>
    </location>
</feature>
<dbReference type="EMBL" id="U01923">
    <property type="status" value="NOT_ANNOTATED_CDS"/>
    <property type="molecule type" value="mRNA"/>
</dbReference>
<dbReference type="EMBL" id="U78027">
    <property type="protein sequence ID" value="AAB64202.1"/>
    <property type="molecule type" value="Genomic_DNA"/>
</dbReference>
<dbReference type="EMBL" id="AL035422">
    <property type="status" value="NOT_ANNOTATED_CDS"/>
    <property type="molecule type" value="Genomic_DNA"/>
</dbReference>
<dbReference type="EMBL" id="CH471115">
    <property type="protein sequence ID" value="EAX02864.1"/>
    <property type="molecule type" value="Genomic_DNA"/>
</dbReference>
<dbReference type="EMBL" id="BC130343">
    <property type="protein sequence ID" value="AAI30344.1"/>
    <property type="molecule type" value="mRNA"/>
</dbReference>
<dbReference type="EMBL" id="BC130345">
    <property type="protein sequence ID" value="AAI30346.1"/>
    <property type="molecule type" value="mRNA"/>
</dbReference>
<dbReference type="CCDS" id="CCDS14485.1"/>
<dbReference type="RefSeq" id="NP_001027565.1">
    <property type="nucleotide sequence ID" value="NM_001032393.3"/>
</dbReference>
<dbReference type="RefSeq" id="NP_062543.1">
    <property type="nucleotide sequence ID" value="NM_019597.5"/>
</dbReference>
<dbReference type="PDB" id="1WEZ">
    <property type="method" value="NMR"/>
    <property type="chains" value="A=281-369"/>
</dbReference>
<dbReference type="PDB" id="1WG5">
    <property type="method" value="NMR"/>
    <property type="chains" value="A=103-193"/>
</dbReference>
<dbReference type="PDB" id="6DG1">
    <property type="method" value="NMR"/>
    <property type="chains" value="A=94-194"/>
</dbReference>
<dbReference type="PDB" id="8SGH">
    <property type="method" value="EM"/>
    <property type="resolution" value="3.17 A"/>
    <property type="chains" value="B=103-225"/>
</dbReference>
<dbReference type="PDBsum" id="1WEZ"/>
<dbReference type="PDBsum" id="1WG5"/>
<dbReference type="PDBsum" id="6DG1"/>
<dbReference type="PDBsum" id="8SGH"/>
<dbReference type="EMDB" id="EMD-40455"/>
<dbReference type="SMR" id="P55795"/>
<dbReference type="BioGRID" id="109429">
    <property type="interactions" value="312"/>
</dbReference>
<dbReference type="FunCoup" id="P55795">
    <property type="interactions" value="3614"/>
</dbReference>
<dbReference type="IntAct" id="P55795">
    <property type="interactions" value="134"/>
</dbReference>
<dbReference type="MINT" id="P55795"/>
<dbReference type="STRING" id="9606.ENSP00000361927"/>
<dbReference type="ChEMBL" id="CHEMBL4296005"/>
<dbReference type="GlyGen" id="P55795">
    <property type="glycosylation" value="1 site, 1 O-linked glycan (1 site)"/>
</dbReference>
<dbReference type="iPTMnet" id="P55795"/>
<dbReference type="MetOSite" id="P55795"/>
<dbReference type="PhosphoSitePlus" id="P55795"/>
<dbReference type="SwissPalm" id="P55795"/>
<dbReference type="BioMuta" id="HNRNPH2"/>
<dbReference type="DMDM" id="2500576"/>
<dbReference type="REPRODUCTION-2DPAGE" id="IPI00026230"/>
<dbReference type="jPOST" id="P55795"/>
<dbReference type="MassIVE" id="P55795"/>
<dbReference type="PaxDb" id="9606-ENSP00000361927"/>
<dbReference type="PeptideAtlas" id="P55795"/>
<dbReference type="PRIDE" id="P55795"/>
<dbReference type="ProteomicsDB" id="56867"/>
<dbReference type="Pumba" id="P55795"/>
<dbReference type="Antibodypedia" id="343">
    <property type="antibodies" value="137 antibodies from 24 providers"/>
</dbReference>
<dbReference type="DNASU" id="3188"/>
<dbReference type="Ensembl" id="ENST00000316594.6">
    <property type="protein sequence ID" value="ENSP00000361927.2"/>
    <property type="gene ID" value="ENSG00000126945.9"/>
</dbReference>
<dbReference type="GeneID" id="3188"/>
<dbReference type="KEGG" id="hsa:3188"/>
<dbReference type="MANE-Select" id="ENST00000316594.6">
    <property type="protein sequence ID" value="ENSP00000361927.2"/>
    <property type="RefSeq nucleotide sequence ID" value="NM_019597.5"/>
    <property type="RefSeq protein sequence ID" value="NP_062543.1"/>
</dbReference>
<dbReference type="UCSC" id="uc004ehm.4">
    <property type="organism name" value="human"/>
</dbReference>
<dbReference type="AGR" id="HGNC:5042"/>
<dbReference type="CTD" id="3188"/>
<dbReference type="DisGeNET" id="3188"/>
<dbReference type="GeneCards" id="HNRNPH2"/>
<dbReference type="GeneReviews" id="HNRNPH2"/>
<dbReference type="HGNC" id="HGNC:5042">
    <property type="gene designation" value="HNRNPH2"/>
</dbReference>
<dbReference type="HPA" id="ENSG00000126945">
    <property type="expression patterns" value="Low tissue specificity"/>
</dbReference>
<dbReference type="MalaCards" id="HNRNPH2"/>
<dbReference type="MIM" id="300610">
    <property type="type" value="gene"/>
</dbReference>
<dbReference type="MIM" id="300986">
    <property type="type" value="phenotype"/>
</dbReference>
<dbReference type="neXtProt" id="NX_P55795"/>
<dbReference type="OpenTargets" id="ENSG00000126945"/>
<dbReference type="Orphanet" id="662198">
    <property type="disease" value="Neurodevelopmental delay-intellectual disability-skeletal defects syndrome"/>
</dbReference>
<dbReference type="PharmGKB" id="PA162391316"/>
<dbReference type="VEuPathDB" id="HostDB:ENSG00000126945"/>
<dbReference type="eggNOG" id="KOG4211">
    <property type="taxonomic scope" value="Eukaryota"/>
</dbReference>
<dbReference type="GeneTree" id="ENSGT00940000153503"/>
<dbReference type="HOGENOM" id="CLU_032003_1_0_1"/>
<dbReference type="InParanoid" id="P55795"/>
<dbReference type="OMA" id="YSCTEDQ"/>
<dbReference type="OrthoDB" id="431068at2759"/>
<dbReference type="PAN-GO" id="P55795">
    <property type="GO annotations" value="4 GO annotations based on evolutionary models"/>
</dbReference>
<dbReference type="PhylomeDB" id="P55795"/>
<dbReference type="TreeFam" id="TF316157"/>
<dbReference type="PathwayCommons" id="P55795"/>
<dbReference type="Reactome" id="R-HSA-72163">
    <property type="pathway name" value="mRNA Splicing - Major Pathway"/>
</dbReference>
<dbReference type="Reactome" id="R-HSA-72203">
    <property type="pathway name" value="Processing of Capped Intron-Containing Pre-mRNA"/>
</dbReference>
<dbReference type="SignaLink" id="P55795"/>
<dbReference type="SIGNOR" id="P55795"/>
<dbReference type="BioGRID-ORCS" id="3188">
    <property type="hits" value="16 hits in 779 CRISPR screens"/>
</dbReference>
<dbReference type="CD-CODE" id="232F8A39">
    <property type="entry name" value="P-body"/>
</dbReference>
<dbReference type="CD-CODE" id="7FF43F25">
    <property type="entry name" value="Synthetic Condensate 000087"/>
</dbReference>
<dbReference type="CD-CODE" id="DEE660B4">
    <property type="entry name" value="Stress granule"/>
</dbReference>
<dbReference type="EvolutionaryTrace" id="P55795"/>
<dbReference type="GeneWiki" id="HNRPH2"/>
<dbReference type="GenomeRNAi" id="3188"/>
<dbReference type="Pharos" id="P55795">
    <property type="development level" value="Tbio"/>
</dbReference>
<dbReference type="PRO" id="PR:P55795"/>
<dbReference type="Proteomes" id="UP000005640">
    <property type="component" value="Chromosome X"/>
</dbReference>
<dbReference type="RNAct" id="P55795">
    <property type="molecule type" value="protein"/>
</dbReference>
<dbReference type="Bgee" id="ENSG00000126945">
    <property type="expression patterns" value="Expressed in choroid plexus epithelium and 211 other cell types or tissues"/>
</dbReference>
<dbReference type="ExpressionAtlas" id="P55795">
    <property type="expression patterns" value="baseline and differential"/>
</dbReference>
<dbReference type="GO" id="GO:0005829">
    <property type="term" value="C:cytosol"/>
    <property type="evidence" value="ECO:0000314"/>
    <property type="project" value="HPA"/>
</dbReference>
<dbReference type="GO" id="GO:0016020">
    <property type="term" value="C:membrane"/>
    <property type="evidence" value="ECO:0007005"/>
    <property type="project" value="UniProtKB"/>
</dbReference>
<dbReference type="GO" id="GO:0005654">
    <property type="term" value="C:nucleoplasm"/>
    <property type="evidence" value="ECO:0000314"/>
    <property type="project" value="UniProtKB"/>
</dbReference>
<dbReference type="GO" id="GO:0005634">
    <property type="term" value="C:nucleus"/>
    <property type="evidence" value="ECO:0000304"/>
    <property type="project" value="ProtInc"/>
</dbReference>
<dbReference type="GO" id="GO:1990904">
    <property type="term" value="C:ribonucleoprotein complex"/>
    <property type="evidence" value="ECO:0000314"/>
    <property type="project" value="MGI"/>
</dbReference>
<dbReference type="GO" id="GO:0003723">
    <property type="term" value="F:RNA binding"/>
    <property type="evidence" value="ECO:0007005"/>
    <property type="project" value="UniProtKB"/>
</dbReference>
<dbReference type="GO" id="GO:0043484">
    <property type="term" value="P:regulation of RNA splicing"/>
    <property type="evidence" value="ECO:0000318"/>
    <property type="project" value="GO_Central"/>
</dbReference>
<dbReference type="CDD" id="cd12729">
    <property type="entry name" value="RRM1_hnRNPH_hnRNPH2_hnRNPF"/>
    <property type="match status" value="1"/>
</dbReference>
<dbReference type="CDD" id="cd12731">
    <property type="entry name" value="RRM2_hnRNPH_hnRNPH2_hnRNPF"/>
    <property type="match status" value="1"/>
</dbReference>
<dbReference type="CDD" id="cd12734">
    <property type="entry name" value="RRM3_hnRNPH_hnRNPH2_hnRNPF"/>
    <property type="match status" value="1"/>
</dbReference>
<dbReference type="FunFam" id="3.30.70.330:FF:000071">
    <property type="entry name" value="heterogeneous nuclear ribonucleoprotein H isoform X1"/>
    <property type="match status" value="1"/>
</dbReference>
<dbReference type="FunFam" id="3.30.70.330:FF:000075">
    <property type="entry name" value="Heterogeneous nuclear ribonucleoprotein H1 (H)"/>
    <property type="match status" value="1"/>
</dbReference>
<dbReference type="FunFam" id="3.30.70.330:FF:000031">
    <property type="entry name" value="Heterogeneous nuclear ribonucleoprotein h3 isoform"/>
    <property type="match status" value="1"/>
</dbReference>
<dbReference type="Gene3D" id="3.30.70.330">
    <property type="match status" value="3"/>
</dbReference>
<dbReference type="InterPro" id="IPR050666">
    <property type="entry name" value="ESRP"/>
</dbReference>
<dbReference type="InterPro" id="IPR012677">
    <property type="entry name" value="Nucleotide-bd_a/b_plait_sf"/>
</dbReference>
<dbReference type="InterPro" id="IPR035979">
    <property type="entry name" value="RBD_domain_sf"/>
</dbReference>
<dbReference type="InterPro" id="IPR000504">
    <property type="entry name" value="RRM_dom"/>
</dbReference>
<dbReference type="InterPro" id="IPR012996">
    <property type="entry name" value="Znf_CHHC"/>
</dbReference>
<dbReference type="PANTHER" id="PTHR13976">
    <property type="entry name" value="HETEROGENEOUS NUCLEAR RIBONUCLEOPROTEIN-RELATED"/>
    <property type="match status" value="1"/>
</dbReference>
<dbReference type="Pfam" id="PF00076">
    <property type="entry name" value="RRM_1"/>
    <property type="match status" value="3"/>
</dbReference>
<dbReference type="Pfam" id="PF08080">
    <property type="entry name" value="zf-RNPHF"/>
    <property type="match status" value="1"/>
</dbReference>
<dbReference type="SMART" id="SM00360">
    <property type="entry name" value="RRM"/>
    <property type="match status" value="3"/>
</dbReference>
<dbReference type="SUPFAM" id="SSF54928">
    <property type="entry name" value="RNA-binding domain, RBD"/>
    <property type="match status" value="3"/>
</dbReference>
<dbReference type="PROSITE" id="PS50102">
    <property type="entry name" value="RRM"/>
    <property type="match status" value="3"/>
</dbReference>
<sequence length="449" mass="49264">MMLSTEGREGFVVKVRGLPWSCSADEVMRFFSDCKIQNGTSGIRFIYTREGRPSGEAFVELESEEEVKLALKKDRETMGHRYVEVFKSNSVEMDWVLKHTGPNSPDTANDGFVRLRGLPFGCSKEEIVQFFSGLEIVPNGMTLPVDFQGRSTGEAFVQFASQEIAEKALKKHKERIGHRYIEIFKSSRAEVRTHYDPPRKLMAMQRPGPYDRPGAGRGYNSIGRGAGFERMRRGAYGGGYGGYDDYGGYNDGYGFGSDRFGRDLNYCFSGMSDHRYGDGGSSFQSTTGHCVHMRGLPYRATENDIYNFFSPLNPMRVHIEIGPDGRVTGEADVEFATHEDAVAAMAKDKANMQHRYVELFLNSTAGTSGGAYDHSYVELFLNSTAGASGGAYGSQMMGGMGLSNQSSYGGPASQQLSGGYGGGYGGQSSMSGYDQVLQENSSDYQSNLA</sequence>
<accession>P55795</accession>
<accession>A1L400</accession>
<accession>Q9HHA7</accession>
<reference key="1">
    <citation type="journal article" date="1994" name="Genomics">
        <title>Isolation of cosmid and cDNA clones in the region surrounding the BTK gene at Xq21.3-q22.</title>
        <authorList>
            <person name="Vorechovsky I."/>
            <person name="Vetrie D."/>
            <person name="Holland J."/>
            <person name="Bentley D.R."/>
            <person name="Thomas K."/>
            <person name="Zhou J.N."/>
            <person name="Notarangelo L.D."/>
            <person name="Plebani A."/>
            <person name="Fontan G."/>
            <person name="Ochs H.D."/>
        </authorList>
    </citation>
    <scope>NUCLEOTIDE SEQUENCE [MRNA]</scope>
</reference>
<reference key="2">
    <citation type="journal article" date="1997" name="Genome Res.">
        <title>Large-scale comparative sequence analysis of the human and murine Bruton's tyrosine kinase loci reveals conserved regulatory domains.</title>
        <authorList>
            <person name="Oeltjen J.C."/>
            <person name="Malley T.M."/>
            <person name="Muzny D.M."/>
            <person name="Miller W."/>
            <person name="Gibbs R.A."/>
            <person name="Belmont J.W."/>
        </authorList>
    </citation>
    <scope>NUCLEOTIDE SEQUENCE [GENOMIC DNA]</scope>
</reference>
<reference key="3">
    <citation type="journal article" date="2005" name="Nature">
        <title>The DNA sequence of the human X chromosome.</title>
        <authorList>
            <person name="Ross M.T."/>
            <person name="Grafham D.V."/>
            <person name="Coffey A.J."/>
            <person name="Scherer S."/>
            <person name="McLay K."/>
            <person name="Muzny D."/>
            <person name="Platzer M."/>
            <person name="Howell G.R."/>
            <person name="Burrows C."/>
            <person name="Bird C.P."/>
            <person name="Frankish A."/>
            <person name="Lovell F.L."/>
            <person name="Howe K.L."/>
            <person name="Ashurst J.L."/>
            <person name="Fulton R.S."/>
            <person name="Sudbrak R."/>
            <person name="Wen G."/>
            <person name="Jones M.C."/>
            <person name="Hurles M.E."/>
            <person name="Andrews T.D."/>
            <person name="Scott C.E."/>
            <person name="Searle S."/>
            <person name="Ramser J."/>
            <person name="Whittaker A."/>
            <person name="Deadman R."/>
            <person name="Carter N.P."/>
            <person name="Hunt S.E."/>
            <person name="Chen R."/>
            <person name="Cree A."/>
            <person name="Gunaratne P."/>
            <person name="Havlak P."/>
            <person name="Hodgson A."/>
            <person name="Metzker M.L."/>
            <person name="Richards S."/>
            <person name="Scott G."/>
            <person name="Steffen D."/>
            <person name="Sodergren E."/>
            <person name="Wheeler D.A."/>
            <person name="Worley K.C."/>
            <person name="Ainscough R."/>
            <person name="Ambrose K.D."/>
            <person name="Ansari-Lari M.A."/>
            <person name="Aradhya S."/>
            <person name="Ashwell R.I."/>
            <person name="Babbage A.K."/>
            <person name="Bagguley C.L."/>
            <person name="Ballabio A."/>
            <person name="Banerjee R."/>
            <person name="Barker G.E."/>
            <person name="Barlow K.F."/>
            <person name="Barrett I.P."/>
            <person name="Bates K.N."/>
            <person name="Beare D.M."/>
            <person name="Beasley H."/>
            <person name="Beasley O."/>
            <person name="Beck A."/>
            <person name="Bethel G."/>
            <person name="Blechschmidt K."/>
            <person name="Brady N."/>
            <person name="Bray-Allen S."/>
            <person name="Bridgeman A.M."/>
            <person name="Brown A.J."/>
            <person name="Brown M.J."/>
            <person name="Bonnin D."/>
            <person name="Bruford E.A."/>
            <person name="Buhay C."/>
            <person name="Burch P."/>
            <person name="Burford D."/>
            <person name="Burgess J."/>
            <person name="Burrill W."/>
            <person name="Burton J."/>
            <person name="Bye J.M."/>
            <person name="Carder C."/>
            <person name="Carrel L."/>
            <person name="Chako J."/>
            <person name="Chapman J.C."/>
            <person name="Chavez D."/>
            <person name="Chen E."/>
            <person name="Chen G."/>
            <person name="Chen Y."/>
            <person name="Chen Z."/>
            <person name="Chinault C."/>
            <person name="Ciccodicola A."/>
            <person name="Clark S.Y."/>
            <person name="Clarke G."/>
            <person name="Clee C.M."/>
            <person name="Clegg S."/>
            <person name="Clerc-Blankenburg K."/>
            <person name="Clifford K."/>
            <person name="Cobley V."/>
            <person name="Cole C.G."/>
            <person name="Conquer J.S."/>
            <person name="Corby N."/>
            <person name="Connor R.E."/>
            <person name="David R."/>
            <person name="Davies J."/>
            <person name="Davis C."/>
            <person name="Davis J."/>
            <person name="Delgado O."/>
            <person name="Deshazo D."/>
            <person name="Dhami P."/>
            <person name="Ding Y."/>
            <person name="Dinh H."/>
            <person name="Dodsworth S."/>
            <person name="Draper H."/>
            <person name="Dugan-Rocha S."/>
            <person name="Dunham A."/>
            <person name="Dunn M."/>
            <person name="Durbin K.J."/>
            <person name="Dutta I."/>
            <person name="Eades T."/>
            <person name="Ellwood M."/>
            <person name="Emery-Cohen A."/>
            <person name="Errington H."/>
            <person name="Evans K.L."/>
            <person name="Faulkner L."/>
            <person name="Francis F."/>
            <person name="Frankland J."/>
            <person name="Fraser A.E."/>
            <person name="Galgoczy P."/>
            <person name="Gilbert J."/>
            <person name="Gill R."/>
            <person name="Gloeckner G."/>
            <person name="Gregory S.G."/>
            <person name="Gribble S."/>
            <person name="Griffiths C."/>
            <person name="Grocock R."/>
            <person name="Gu Y."/>
            <person name="Gwilliam R."/>
            <person name="Hamilton C."/>
            <person name="Hart E.A."/>
            <person name="Hawes A."/>
            <person name="Heath P.D."/>
            <person name="Heitmann K."/>
            <person name="Hennig S."/>
            <person name="Hernandez J."/>
            <person name="Hinzmann B."/>
            <person name="Ho S."/>
            <person name="Hoffs M."/>
            <person name="Howden P.J."/>
            <person name="Huckle E.J."/>
            <person name="Hume J."/>
            <person name="Hunt P.J."/>
            <person name="Hunt A.R."/>
            <person name="Isherwood J."/>
            <person name="Jacob L."/>
            <person name="Johnson D."/>
            <person name="Jones S."/>
            <person name="de Jong P.J."/>
            <person name="Joseph S.S."/>
            <person name="Keenan S."/>
            <person name="Kelly S."/>
            <person name="Kershaw J.K."/>
            <person name="Khan Z."/>
            <person name="Kioschis P."/>
            <person name="Klages S."/>
            <person name="Knights A.J."/>
            <person name="Kosiura A."/>
            <person name="Kovar-Smith C."/>
            <person name="Laird G.K."/>
            <person name="Langford C."/>
            <person name="Lawlor S."/>
            <person name="Leversha M."/>
            <person name="Lewis L."/>
            <person name="Liu W."/>
            <person name="Lloyd C."/>
            <person name="Lloyd D.M."/>
            <person name="Loulseged H."/>
            <person name="Loveland J.E."/>
            <person name="Lovell J.D."/>
            <person name="Lozado R."/>
            <person name="Lu J."/>
            <person name="Lyne R."/>
            <person name="Ma J."/>
            <person name="Maheshwari M."/>
            <person name="Matthews L.H."/>
            <person name="McDowall J."/>
            <person name="McLaren S."/>
            <person name="McMurray A."/>
            <person name="Meidl P."/>
            <person name="Meitinger T."/>
            <person name="Milne S."/>
            <person name="Miner G."/>
            <person name="Mistry S.L."/>
            <person name="Morgan M."/>
            <person name="Morris S."/>
            <person name="Mueller I."/>
            <person name="Mullikin J.C."/>
            <person name="Nguyen N."/>
            <person name="Nordsiek G."/>
            <person name="Nyakatura G."/>
            <person name="O'dell C.N."/>
            <person name="Okwuonu G."/>
            <person name="Palmer S."/>
            <person name="Pandian R."/>
            <person name="Parker D."/>
            <person name="Parrish J."/>
            <person name="Pasternak S."/>
            <person name="Patel D."/>
            <person name="Pearce A.V."/>
            <person name="Pearson D.M."/>
            <person name="Pelan S.E."/>
            <person name="Perez L."/>
            <person name="Porter K.M."/>
            <person name="Ramsey Y."/>
            <person name="Reichwald K."/>
            <person name="Rhodes S."/>
            <person name="Ridler K.A."/>
            <person name="Schlessinger D."/>
            <person name="Schueler M.G."/>
            <person name="Sehra H.K."/>
            <person name="Shaw-Smith C."/>
            <person name="Shen H."/>
            <person name="Sheridan E.M."/>
            <person name="Shownkeen R."/>
            <person name="Skuce C.D."/>
            <person name="Smith M.L."/>
            <person name="Sotheran E.C."/>
            <person name="Steingruber H.E."/>
            <person name="Steward C.A."/>
            <person name="Storey R."/>
            <person name="Swann R.M."/>
            <person name="Swarbreck D."/>
            <person name="Tabor P.E."/>
            <person name="Taudien S."/>
            <person name="Taylor T."/>
            <person name="Teague B."/>
            <person name="Thomas K."/>
            <person name="Thorpe A."/>
            <person name="Timms K."/>
            <person name="Tracey A."/>
            <person name="Trevanion S."/>
            <person name="Tromans A.C."/>
            <person name="d'Urso M."/>
            <person name="Verduzco D."/>
            <person name="Villasana D."/>
            <person name="Waldron L."/>
            <person name="Wall M."/>
            <person name="Wang Q."/>
            <person name="Warren J."/>
            <person name="Warry G.L."/>
            <person name="Wei X."/>
            <person name="West A."/>
            <person name="Whitehead S.L."/>
            <person name="Whiteley M.N."/>
            <person name="Wilkinson J.E."/>
            <person name="Willey D.L."/>
            <person name="Williams G."/>
            <person name="Williams L."/>
            <person name="Williamson A."/>
            <person name="Williamson H."/>
            <person name="Wilming L."/>
            <person name="Woodmansey R.L."/>
            <person name="Wray P.W."/>
            <person name="Yen J."/>
            <person name="Zhang J."/>
            <person name="Zhou J."/>
            <person name="Zoghbi H."/>
            <person name="Zorilla S."/>
            <person name="Buck D."/>
            <person name="Reinhardt R."/>
            <person name="Poustka A."/>
            <person name="Rosenthal A."/>
            <person name="Lehrach H."/>
            <person name="Meindl A."/>
            <person name="Minx P.J."/>
            <person name="Hillier L.W."/>
            <person name="Willard H.F."/>
            <person name="Wilson R.K."/>
            <person name="Waterston R.H."/>
            <person name="Rice C.M."/>
            <person name="Vaudin M."/>
            <person name="Coulson A."/>
            <person name="Nelson D.L."/>
            <person name="Weinstock G."/>
            <person name="Sulston J.E."/>
            <person name="Durbin R.M."/>
            <person name="Hubbard T."/>
            <person name="Gibbs R.A."/>
            <person name="Beck S."/>
            <person name="Rogers J."/>
            <person name="Bentley D.R."/>
        </authorList>
    </citation>
    <scope>NUCLEOTIDE SEQUENCE [LARGE SCALE GENOMIC DNA]</scope>
</reference>
<reference key="4">
    <citation type="submission" date="2005-07" db="EMBL/GenBank/DDBJ databases">
        <authorList>
            <person name="Mural R.J."/>
            <person name="Istrail S."/>
            <person name="Sutton G.G."/>
            <person name="Florea L."/>
            <person name="Halpern A.L."/>
            <person name="Mobarry C.M."/>
            <person name="Lippert R."/>
            <person name="Walenz B."/>
            <person name="Shatkay H."/>
            <person name="Dew I."/>
            <person name="Miller J.R."/>
            <person name="Flanigan M.J."/>
            <person name="Edwards N.J."/>
            <person name="Bolanos R."/>
            <person name="Fasulo D."/>
            <person name="Halldorsson B.V."/>
            <person name="Hannenhalli S."/>
            <person name="Turner R."/>
            <person name="Yooseph S."/>
            <person name="Lu F."/>
            <person name="Nusskern D.R."/>
            <person name="Shue B.C."/>
            <person name="Zheng X.H."/>
            <person name="Zhong F."/>
            <person name="Delcher A.L."/>
            <person name="Huson D.H."/>
            <person name="Kravitz S.A."/>
            <person name="Mouchard L."/>
            <person name="Reinert K."/>
            <person name="Remington K.A."/>
            <person name="Clark A.G."/>
            <person name="Waterman M.S."/>
            <person name="Eichler E.E."/>
            <person name="Adams M.D."/>
            <person name="Hunkapiller M.W."/>
            <person name="Myers E.W."/>
            <person name="Venter J.C."/>
        </authorList>
    </citation>
    <scope>NUCLEOTIDE SEQUENCE [LARGE SCALE GENOMIC DNA]</scope>
</reference>
<reference key="5">
    <citation type="journal article" date="1995" name="J. Biol. Chem.">
        <title>Heterogeneous nuclear ribonucleoproteins H, H', and F are members of a ubiquitously expressed subfamily of related but distinct proteins encoded by genes mapping to different chromosomes.</title>
        <authorList>
            <person name="Honore B."/>
            <person name="Rasmussen H.H."/>
            <person name="Vorum H."/>
            <person name="Dejgaard K."/>
            <person name="Liu X."/>
            <person name="Gromov P."/>
            <person name="Madsen P."/>
            <person name="Gesser B."/>
            <person name="Tommerup N."/>
            <person name="Celis J.E."/>
        </authorList>
    </citation>
    <scope>PARTIAL NUCLEOTIDE SEQUENCE [MRNA]</scope>
</reference>
<reference key="6">
    <citation type="journal article" date="2004" name="Genome Res.">
        <title>The status, quality, and expansion of the NIH full-length cDNA project: the Mammalian Gene Collection (MGC).</title>
        <authorList>
            <consortium name="The MGC Project Team"/>
        </authorList>
    </citation>
    <scope>NUCLEOTIDE SEQUENCE [LARGE SCALE MRNA]</scope>
    <source>
        <tissue>Brain</tissue>
    </source>
</reference>
<reference key="7">
    <citation type="submission" date="2008-12" db="UniProtKB">
        <authorList>
            <person name="Bienvenut W.V."/>
            <person name="Lilla S."/>
            <person name="von Kriegsheim A."/>
            <person name="Lempens A."/>
            <person name="Kolch W."/>
        </authorList>
    </citation>
    <scope>PROTEIN SEQUENCE OF 1-8; 88-114; 151-167; 276-294 AND 300-326</scope>
    <scope>ACETYLATION AT MET-1</scope>
    <scope>IDENTIFICATION BY MASS SPECTROMETRY</scope>
    <source>
        <tissue>Ovarian carcinoma</tissue>
    </source>
</reference>
<reference key="8">
    <citation type="submission" date="2008-12" db="UniProtKB">
        <authorList>
            <person name="Lubec G."/>
            <person name="Chen W.-Q."/>
            <person name="Sun Y."/>
        </authorList>
    </citation>
    <scope>PROTEIN SEQUENCE OF 17-29; 36-44; 88-98; 151-167; 263-275; 300-316 AND 327-347</scope>
    <scope>IDENTIFICATION BY MASS SPECTROMETRY</scope>
    <source>
        <tissue>Fetal brain cortex</tissue>
    </source>
</reference>
<reference key="9">
    <citation type="journal article" date="2000" name="Gene">
        <title>Evidence that Dim1 associates with proteins involved in pre-mRNA splicing, and delineation of residues essential for Dim1 interactions with hnRNP F and Npw38/PQBP-1.</title>
        <authorList>
            <person name="Zhang Y.-Z."/>
            <person name="Lindblom T."/>
            <person name="Chang A."/>
            <person name="Sudol M."/>
            <person name="Sluder A.E."/>
            <person name="Golemis E.A."/>
        </authorList>
    </citation>
    <scope>INTERACTION WITH TXNL4</scope>
</reference>
<reference key="10">
    <citation type="journal article" date="2008" name="Mol. Cell">
        <title>Kinase-selective enrichment enables quantitative phosphoproteomics of the kinome across the cell cycle.</title>
        <authorList>
            <person name="Daub H."/>
            <person name="Olsen J.V."/>
            <person name="Bairlein M."/>
            <person name="Gnad F."/>
            <person name="Oppermann F.S."/>
            <person name="Korner R."/>
            <person name="Greff Z."/>
            <person name="Keri G."/>
            <person name="Stemmann O."/>
            <person name="Mann M."/>
        </authorList>
    </citation>
    <scope>PHOSPHORYLATION [LARGE SCALE ANALYSIS] AT SER-310</scope>
    <scope>IDENTIFICATION BY MASS SPECTROMETRY [LARGE SCALE ANALYSIS]</scope>
    <source>
        <tissue>Cervix carcinoma</tissue>
    </source>
</reference>
<reference key="11">
    <citation type="journal article" date="2008" name="Proc. Natl. Acad. Sci. U.S.A.">
        <title>A quantitative atlas of mitotic phosphorylation.</title>
        <authorList>
            <person name="Dephoure N."/>
            <person name="Zhou C."/>
            <person name="Villen J."/>
            <person name="Beausoleil S.A."/>
            <person name="Bakalarski C.E."/>
            <person name="Elledge S.J."/>
            <person name="Gygi S.P."/>
        </authorList>
    </citation>
    <scope>PHOSPHORYLATION [LARGE SCALE ANALYSIS] AT SER-310</scope>
    <scope>IDENTIFICATION BY MASS SPECTROMETRY [LARGE SCALE ANALYSIS]</scope>
    <source>
        <tissue>Cervix carcinoma</tissue>
    </source>
</reference>
<reference key="12">
    <citation type="journal article" date="2009" name="Anal. Chem.">
        <title>Lys-N and trypsin cover complementary parts of the phosphoproteome in a refined SCX-based approach.</title>
        <authorList>
            <person name="Gauci S."/>
            <person name="Helbig A.O."/>
            <person name="Slijper M."/>
            <person name="Krijgsveld J."/>
            <person name="Heck A.J."/>
            <person name="Mohammed S."/>
        </authorList>
    </citation>
    <scope>ACETYLATION [LARGE SCALE ANALYSIS] AT MET-1</scope>
    <scope>IDENTIFICATION BY MASS SPECTROMETRY [LARGE SCALE ANALYSIS]</scope>
</reference>
<reference key="13">
    <citation type="journal article" date="2009" name="Sci. Signal.">
        <title>Quantitative phosphoproteomic analysis of T cell receptor signaling reveals system-wide modulation of protein-protein interactions.</title>
        <authorList>
            <person name="Mayya V."/>
            <person name="Lundgren D.H."/>
            <person name="Hwang S.-I."/>
            <person name="Rezaul K."/>
            <person name="Wu L."/>
            <person name="Eng J.K."/>
            <person name="Rodionov V."/>
            <person name="Han D.K."/>
        </authorList>
    </citation>
    <scope>PHOSPHORYLATION [LARGE SCALE ANALYSIS] AT SER-310</scope>
    <scope>IDENTIFICATION BY MASS SPECTROMETRY [LARGE SCALE ANALYSIS]</scope>
    <source>
        <tissue>Leukemic T-cell</tissue>
    </source>
</reference>
<reference key="14">
    <citation type="journal article" date="2010" name="Sci. Signal.">
        <title>Quantitative phosphoproteomics reveals widespread full phosphorylation site occupancy during mitosis.</title>
        <authorList>
            <person name="Olsen J.V."/>
            <person name="Vermeulen M."/>
            <person name="Santamaria A."/>
            <person name="Kumar C."/>
            <person name="Miller M.L."/>
            <person name="Jensen L.J."/>
            <person name="Gnad F."/>
            <person name="Cox J."/>
            <person name="Jensen T.S."/>
            <person name="Nigg E.A."/>
            <person name="Brunak S."/>
            <person name="Mann M."/>
        </authorList>
    </citation>
    <scope>PHOSPHORYLATION [LARGE SCALE ANALYSIS] AT SER-310</scope>
    <scope>IDENTIFICATION BY MASS SPECTROMETRY [LARGE SCALE ANALYSIS]</scope>
    <source>
        <tissue>Cervix carcinoma</tissue>
    </source>
</reference>
<reference key="15">
    <citation type="journal article" date="2011" name="BMC Syst. Biol.">
        <title>Initial characterization of the human central proteome.</title>
        <authorList>
            <person name="Burkard T.R."/>
            <person name="Planyavsky M."/>
            <person name="Kaupe I."/>
            <person name="Breitwieser F.P."/>
            <person name="Buerckstuemmer T."/>
            <person name="Bennett K.L."/>
            <person name="Superti-Furga G."/>
            <person name="Colinge J."/>
        </authorList>
    </citation>
    <scope>IDENTIFICATION BY MASS SPECTROMETRY [LARGE SCALE ANALYSIS]</scope>
</reference>
<reference key="16">
    <citation type="journal article" date="2012" name="Mol. Cell. Proteomics">
        <title>Comparative large-scale characterisation of plant vs. mammal proteins reveals similar and idiosyncratic N-alpha acetylation features.</title>
        <authorList>
            <person name="Bienvenut W.V."/>
            <person name="Sumpton D."/>
            <person name="Martinez A."/>
            <person name="Lilla S."/>
            <person name="Espagne C."/>
            <person name="Meinnel T."/>
            <person name="Giglione C."/>
        </authorList>
    </citation>
    <scope>ACETYLATION [LARGE SCALE ANALYSIS] AT MET-1</scope>
    <scope>IDENTIFICATION BY MASS SPECTROMETRY [LARGE SCALE ANALYSIS]</scope>
</reference>
<reference key="17">
    <citation type="journal article" date="2012" name="Proc. Natl. Acad. Sci. U.S.A.">
        <title>N-terminal acetylome analyses and functional insights of the N-terminal acetyltransferase NatB.</title>
        <authorList>
            <person name="Van Damme P."/>
            <person name="Lasa M."/>
            <person name="Polevoda B."/>
            <person name="Gazquez C."/>
            <person name="Elosegui-Artola A."/>
            <person name="Kim D.S."/>
            <person name="De Juan-Pardo E."/>
            <person name="Demeyer K."/>
            <person name="Hole K."/>
            <person name="Larrea E."/>
            <person name="Timmerman E."/>
            <person name="Prieto J."/>
            <person name="Arnesen T."/>
            <person name="Sherman F."/>
            <person name="Gevaert K."/>
            <person name="Aldabe R."/>
        </authorList>
    </citation>
    <scope>ACETYLATION [LARGE SCALE ANALYSIS] AT MET-1</scope>
    <scope>IDENTIFICATION BY MASS SPECTROMETRY [LARGE SCALE ANALYSIS]</scope>
</reference>
<reference key="18">
    <citation type="journal article" date="2013" name="J. Proteome Res.">
        <title>Toward a comprehensive characterization of a human cancer cell phosphoproteome.</title>
        <authorList>
            <person name="Zhou H."/>
            <person name="Di Palma S."/>
            <person name="Preisinger C."/>
            <person name="Peng M."/>
            <person name="Polat A.N."/>
            <person name="Heck A.J."/>
            <person name="Mohammed S."/>
        </authorList>
    </citation>
    <scope>PHOSPHORYLATION [LARGE SCALE ANALYSIS] AT SER-310</scope>
    <scope>IDENTIFICATION BY MASS SPECTROMETRY [LARGE SCALE ANALYSIS]</scope>
    <source>
        <tissue>Erythroleukemia</tissue>
    </source>
</reference>
<reference key="19">
    <citation type="journal article" date="2014" name="J. Biol. Chem.">
        <title>Nuclear ARVCF protein binds splicing factors and contributes to the regulation of alternative splicing.</title>
        <authorList>
            <person name="Rappe U."/>
            <person name="Schlechter T."/>
            <person name="Aschoff M."/>
            <person name="Hotz-Wagenblatt A."/>
            <person name="Hofmann I."/>
        </authorList>
    </citation>
    <scope>IDENTIFICATION IN RIBONUCLEOPROTEIN COMPLEX</scope>
    <scope>INTERACTION WITH ARVCF</scope>
    <scope>SUBCELLULAR LOCATION</scope>
</reference>
<reference key="20">
    <citation type="journal article" date="2014" name="Mol. Cell. Proteomics">
        <title>Immunoaffinity enrichment and mass spectrometry analysis of protein methylation.</title>
        <authorList>
            <person name="Guo A."/>
            <person name="Gu H."/>
            <person name="Zhou J."/>
            <person name="Mulhern D."/>
            <person name="Wang Y."/>
            <person name="Lee K.A."/>
            <person name="Yang V."/>
            <person name="Aguiar M."/>
            <person name="Kornhauser J."/>
            <person name="Jia X."/>
            <person name="Ren J."/>
            <person name="Beausoleil S.A."/>
            <person name="Silva J.C."/>
            <person name="Vemulapalli V."/>
            <person name="Bedford M.T."/>
            <person name="Comb M.J."/>
        </authorList>
    </citation>
    <scope>METHYLATION [LARGE SCALE ANALYSIS] AT ARG-233</scope>
    <scope>IDENTIFICATION BY MASS SPECTROMETRY [LARGE SCALE ANALYSIS]</scope>
    <source>
        <tissue>Colon carcinoma</tissue>
    </source>
</reference>
<reference key="21">
    <citation type="journal article" date="2017" name="Nat. Struct. Mol. Biol.">
        <title>Site-specific mapping of the human SUMO proteome reveals co-modification with phosphorylation.</title>
        <authorList>
            <person name="Hendriks I.A."/>
            <person name="Lyon D."/>
            <person name="Young C."/>
            <person name="Jensen L.J."/>
            <person name="Vertegaal A.C."/>
            <person name="Nielsen M.L."/>
        </authorList>
    </citation>
    <scope>SUMOYLATION [LARGE SCALE ANALYSIS] AT LYS-35</scope>
    <scope>IDENTIFICATION BY MASS SPECTROMETRY [LARGE SCALE ANALYSIS]</scope>
</reference>
<reference key="22">
    <citation type="submission" date="2004-11" db="PDB data bank">
        <title>Solution structure of RRM domains in heterogeneous nuclear ribonucleoprotein H.</title>
        <authorList>
            <consortium name="RIKEN structural genomics initiative (RSGI)"/>
        </authorList>
    </citation>
    <scope>STRUCTURE BY NMR OF 103-193 AND 280-369</scope>
</reference>
<reference key="23">
    <citation type="journal article" date="2016" name="Am. J. Hum. Genet.">
        <title>Variants in HNRNPH2 on the X chromosome are associated with a neurodevelopmental disorder in females.</title>
        <authorList>
            <person name="Bain J.M."/>
            <person name="Cho M.T."/>
            <person name="Telegrafi A."/>
            <person name="Wilson A."/>
            <person name="Brooks S."/>
            <person name="Botti C."/>
            <person name="Gowans G."/>
            <person name="Autullo L.A."/>
            <person name="Krishnamurthy V."/>
            <person name="Willing M.C."/>
            <person name="Toler T.L."/>
            <person name="Ben-Zev B."/>
            <person name="Elpeleg O."/>
            <person name="Shen Y."/>
            <person name="Retterer K."/>
            <person name="Monaghan K.G."/>
            <person name="Chung W.K."/>
        </authorList>
    </citation>
    <scope>VARIANTS MRXSB GLN-206; TRP-206 AND LEU-209</scope>
    <scope>CHARACTERIZATION OF VARIANTS MRXSB GLN-206; TRP-206 AND LEU-209</scope>
    <scope>INVOLVEMENT IN MRXSB</scope>
</reference>
<gene>
    <name type="primary">HNRNPH2</name>
    <name type="synonym">FTP3</name>
    <name type="synonym">HNRPH2</name>
</gene>
<keyword id="KW-0002">3D-structure</keyword>
<keyword id="KW-0007">Acetylation</keyword>
<keyword id="KW-0903">Direct protein sequencing</keyword>
<keyword id="KW-0225">Disease variant</keyword>
<keyword id="KW-0991">Intellectual disability</keyword>
<keyword id="KW-1017">Isopeptide bond</keyword>
<keyword id="KW-0488">Methylation</keyword>
<keyword id="KW-0539">Nucleus</keyword>
<keyword id="KW-0597">Phosphoprotein</keyword>
<keyword id="KW-1267">Proteomics identification</keyword>
<keyword id="KW-1185">Reference proteome</keyword>
<keyword id="KW-0677">Repeat</keyword>
<keyword id="KW-0687">Ribonucleoprotein</keyword>
<keyword id="KW-0694">RNA-binding</keyword>
<keyword id="KW-0832">Ubl conjugation</keyword>